<comment type="function">
    <text evidence="1">Assembles around the rod to form the L-ring and probably protects the motor/basal body from shearing forces during rotation.</text>
</comment>
<comment type="subunit">
    <text evidence="1">The basal body constitutes a major portion of the flagellar organelle and consists of four rings (L,P,S, and M) mounted on a central rod.</text>
</comment>
<comment type="subcellular location">
    <subcellularLocation>
        <location evidence="1">Cell outer membrane</location>
        <topology evidence="1">Lipid-anchor</topology>
    </subcellularLocation>
    <subcellularLocation>
        <location evidence="1">Bacterial flagellum basal body</location>
    </subcellularLocation>
</comment>
<comment type="similarity">
    <text evidence="1">Belongs to the FlgH family.</text>
</comment>
<sequence length="231" mass="24268">MNRFICVLALSGSAVLAGCVAPPPKPNDPYYAPVLPRTPLPSASNNGSIYQAGFEQNLYSDRKAFRVGDIITITLNERTNASKGANSALTKTSSNSIGLTSLFGAVPNTNNPLGDGDLTLNAGYSGNRATKGDSKAAQSNSLTGSITVTVADVLPNGIIAVRGEKWMTLNTGDELVRIAGLVRADDIATDNTVSSTRVADARITYSGTGSFADANQPGWFDRFFLSPLFPF</sequence>
<keyword id="KW-0975">Bacterial flagellum</keyword>
<keyword id="KW-0998">Cell outer membrane</keyword>
<keyword id="KW-0449">Lipoprotein</keyword>
<keyword id="KW-0472">Membrane</keyword>
<keyword id="KW-0564">Palmitate</keyword>
<keyword id="KW-0732">Signal</keyword>
<accession>Q4KG92</accession>
<name>FLGH_PSEF5</name>
<organism>
    <name type="scientific">Pseudomonas fluorescens (strain ATCC BAA-477 / NRRL B-23932 / Pf-5)</name>
    <dbReference type="NCBI Taxonomy" id="220664"/>
    <lineage>
        <taxon>Bacteria</taxon>
        <taxon>Pseudomonadati</taxon>
        <taxon>Pseudomonadota</taxon>
        <taxon>Gammaproteobacteria</taxon>
        <taxon>Pseudomonadales</taxon>
        <taxon>Pseudomonadaceae</taxon>
        <taxon>Pseudomonas</taxon>
    </lineage>
</organism>
<dbReference type="EMBL" id="CP000076">
    <property type="protein sequence ID" value="AAY90912.1"/>
    <property type="molecule type" value="Genomic_DNA"/>
</dbReference>
<dbReference type="RefSeq" id="WP_011059951.1">
    <property type="nucleotide sequence ID" value="NC_004129.6"/>
</dbReference>
<dbReference type="SMR" id="Q4KG92"/>
<dbReference type="STRING" id="220664.PFL_1615"/>
<dbReference type="GeneID" id="57474634"/>
<dbReference type="KEGG" id="pfl:PFL_1615"/>
<dbReference type="PATRIC" id="fig|220664.5.peg.1654"/>
<dbReference type="eggNOG" id="COG2063">
    <property type="taxonomic scope" value="Bacteria"/>
</dbReference>
<dbReference type="HOGENOM" id="CLU_069313_0_2_6"/>
<dbReference type="Proteomes" id="UP000008540">
    <property type="component" value="Chromosome"/>
</dbReference>
<dbReference type="GO" id="GO:0009427">
    <property type="term" value="C:bacterial-type flagellum basal body, distal rod, L ring"/>
    <property type="evidence" value="ECO:0007669"/>
    <property type="project" value="InterPro"/>
</dbReference>
<dbReference type="GO" id="GO:0009279">
    <property type="term" value="C:cell outer membrane"/>
    <property type="evidence" value="ECO:0007669"/>
    <property type="project" value="UniProtKB-SubCell"/>
</dbReference>
<dbReference type="GO" id="GO:0003774">
    <property type="term" value="F:cytoskeletal motor activity"/>
    <property type="evidence" value="ECO:0007669"/>
    <property type="project" value="InterPro"/>
</dbReference>
<dbReference type="GO" id="GO:0071973">
    <property type="term" value="P:bacterial-type flagellum-dependent cell motility"/>
    <property type="evidence" value="ECO:0007669"/>
    <property type="project" value="InterPro"/>
</dbReference>
<dbReference type="HAMAP" id="MF_00415">
    <property type="entry name" value="FlgH"/>
    <property type="match status" value="1"/>
</dbReference>
<dbReference type="InterPro" id="IPR000527">
    <property type="entry name" value="Flag_Lring"/>
</dbReference>
<dbReference type="NCBIfam" id="NF001304">
    <property type="entry name" value="PRK00249.1-4"/>
    <property type="match status" value="1"/>
</dbReference>
<dbReference type="PANTHER" id="PTHR34933">
    <property type="entry name" value="FLAGELLAR L-RING PROTEIN"/>
    <property type="match status" value="1"/>
</dbReference>
<dbReference type="PANTHER" id="PTHR34933:SF1">
    <property type="entry name" value="FLAGELLAR L-RING PROTEIN"/>
    <property type="match status" value="1"/>
</dbReference>
<dbReference type="Pfam" id="PF02107">
    <property type="entry name" value="FlgH"/>
    <property type="match status" value="1"/>
</dbReference>
<dbReference type="PRINTS" id="PR01008">
    <property type="entry name" value="FLGLRINGFLGH"/>
</dbReference>
<dbReference type="PROSITE" id="PS51257">
    <property type="entry name" value="PROKAR_LIPOPROTEIN"/>
    <property type="match status" value="1"/>
</dbReference>
<evidence type="ECO:0000255" key="1">
    <source>
        <dbReference type="HAMAP-Rule" id="MF_00415"/>
    </source>
</evidence>
<proteinExistence type="inferred from homology"/>
<reference key="1">
    <citation type="journal article" date="2005" name="Nat. Biotechnol.">
        <title>Complete genome sequence of the plant commensal Pseudomonas fluorescens Pf-5.</title>
        <authorList>
            <person name="Paulsen I.T."/>
            <person name="Press C.M."/>
            <person name="Ravel J."/>
            <person name="Kobayashi D.Y."/>
            <person name="Myers G.S.A."/>
            <person name="Mavrodi D.V."/>
            <person name="DeBoy R.T."/>
            <person name="Seshadri R."/>
            <person name="Ren Q."/>
            <person name="Madupu R."/>
            <person name="Dodson R.J."/>
            <person name="Durkin A.S."/>
            <person name="Brinkac L.M."/>
            <person name="Daugherty S.C."/>
            <person name="Sullivan S.A."/>
            <person name="Rosovitz M.J."/>
            <person name="Gwinn M.L."/>
            <person name="Zhou L."/>
            <person name="Schneider D.J."/>
            <person name="Cartinhour S.W."/>
            <person name="Nelson W.C."/>
            <person name="Weidman J."/>
            <person name="Watkins K."/>
            <person name="Tran K."/>
            <person name="Khouri H."/>
            <person name="Pierson E.A."/>
            <person name="Pierson L.S. III"/>
            <person name="Thomashow L.S."/>
            <person name="Loper J.E."/>
        </authorList>
    </citation>
    <scope>NUCLEOTIDE SEQUENCE [LARGE SCALE GENOMIC DNA]</scope>
    <source>
        <strain>ATCC BAA-477 / NRRL B-23932 / Pf-5</strain>
    </source>
</reference>
<feature type="signal peptide" evidence="1">
    <location>
        <begin position="1"/>
        <end position="18"/>
    </location>
</feature>
<feature type="chain" id="PRO_0000236828" description="Flagellar L-ring protein">
    <location>
        <begin position="19"/>
        <end position="231"/>
    </location>
</feature>
<feature type="lipid moiety-binding region" description="N-palmitoyl cysteine" evidence="1">
    <location>
        <position position="19"/>
    </location>
</feature>
<feature type="lipid moiety-binding region" description="S-diacylglycerol cysteine" evidence="1">
    <location>
        <position position="19"/>
    </location>
</feature>
<protein>
    <recommendedName>
        <fullName evidence="1">Flagellar L-ring protein</fullName>
    </recommendedName>
    <alternativeName>
        <fullName evidence="1">Basal body L-ring protein</fullName>
    </alternativeName>
</protein>
<gene>
    <name evidence="1" type="primary">flgH</name>
    <name type="ordered locus">PFL_1615</name>
</gene>